<protein>
    <recommendedName>
        <fullName evidence="1">Threonine--tRNA ligase</fullName>
        <ecNumber evidence="1">6.1.1.3</ecNumber>
    </recommendedName>
    <alternativeName>
        <fullName evidence="1">Threonyl-tRNA synthetase</fullName>
        <shortName evidence="1">ThrRS</shortName>
    </alternativeName>
</protein>
<sequence>MVSIRLPDGSVRQYEHPVTVAEVAASIGPGLAKAALGGKLDGELVDTSALIDRDASLAIVTDKDADGLDIIRHSTAHLLAYAVKELHPDAQVTIGPVIDNGFYYDFSYHRPFTPEDLEAIEKRMQELAKRDEPVTRRVVSRDEAVSYFRSIGEKYKAEIIESIPASDEIKLYSHGSFTDLCRGPHVPSTGKLKVFKLMKVAGAYWRGDSKNEQLQRIYGTAWTRKEDQDAYLHMLEEAEKRDHRKLGKQLDLFHIQEEAPGMVFWHPKGWTLWQQVEQYMRRRLDAAGYLEIKTPMIMDRSLWEASGHWQNYRENMFTTESEKRDYAIKPMNCPGHVQVFKHGLRSYRDLPLRYAEFGSCHRNEASGALHGLMRVRGFVQDDAHIFCTEDQINSEAIAFNKLAMSVYEDFGFDRIDIKLSLRPEQRMGSDETWDHAEEGLRNALKACGLEWEELPGEGAFYGPKIEYHIKDALGRSWQCGTLQLDMMLPERLGAEYVAEDNSRRRPVMLHRAIVGSMERFLGILIEHHAGAMPVWLAPAHAVVLNIAESQAEYARTVAQSLQKQGLRVSADLRNEKISYKIREHTLEKVPYLLVVGDKEREAQTVAVRARGGVDLGVMPVEAFVERLREDIQAFK</sequence>
<feature type="chain" id="PRO_1000020357" description="Threonine--tRNA ligase">
    <location>
        <begin position="1"/>
        <end position="635"/>
    </location>
</feature>
<feature type="domain" description="TGS" evidence="2">
    <location>
        <begin position="1"/>
        <end position="61"/>
    </location>
</feature>
<feature type="region of interest" description="Catalytic" evidence="1">
    <location>
        <begin position="242"/>
        <end position="533"/>
    </location>
</feature>
<feature type="binding site" evidence="1">
    <location>
        <position position="333"/>
    </location>
    <ligand>
        <name>Zn(2+)</name>
        <dbReference type="ChEBI" id="CHEBI:29105"/>
    </ligand>
</feature>
<feature type="binding site" evidence="1">
    <location>
        <position position="384"/>
    </location>
    <ligand>
        <name>Zn(2+)</name>
        <dbReference type="ChEBI" id="CHEBI:29105"/>
    </ligand>
</feature>
<feature type="binding site" evidence="1">
    <location>
        <position position="510"/>
    </location>
    <ligand>
        <name>Zn(2+)</name>
        <dbReference type="ChEBI" id="CHEBI:29105"/>
    </ligand>
</feature>
<evidence type="ECO:0000255" key="1">
    <source>
        <dbReference type="HAMAP-Rule" id="MF_00184"/>
    </source>
</evidence>
<evidence type="ECO:0000255" key="2">
    <source>
        <dbReference type="PROSITE-ProRule" id="PRU01228"/>
    </source>
</evidence>
<gene>
    <name evidence="1" type="primary">thrS</name>
    <name type="ordered locus">BURPS668_1712</name>
</gene>
<dbReference type="EC" id="6.1.1.3" evidence="1"/>
<dbReference type="EMBL" id="CP000570">
    <property type="protein sequence ID" value="ABN84515.1"/>
    <property type="molecule type" value="Genomic_DNA"/>
</dbReference>
<dbReference type="RefSeq" id="WP_004191232.1">
    <property type="nucleotide sequence ID" value="NC_009074.1"/>
</dbReference>
<dbReference type="SMR" id="A3N8T1"/>
<dbReference type="GeneID" id="93060046"/>
<dbReference type="KEGG" id="bpd:BURPS668_1712"/>
<dbReference type="HOGENOM" id="CLU_008554_0_1_4"/>
<dbReference type="GO" id="GO:0005829">
    <property type="term" value="C:cytosol"/>
    <property type="evidence" value="ECO:0007669"/>
    <property type="project" value="TreeGrafter"/>
</dbReference>
<dbReference type="GO" id="GO:0005524">
    <property type="term" value="F:ATP binding"/>
    <property type="evidence" value="ECO:0007669"/>
    <property type="project" value="UniProtKB-UniRule"/>
</dbReference>
<dbReference type="GO" id="GO:0046872">
    <property type="term" value="F:metal ion binding"/>
    <property type="evidence" value="ECO:0007669"/>
    <property type="project" value="UniProtKB-KW"/>
</dbReference>
<dbReference type="GO" id="GO:0004829">
    <property type="term" value="F:threonine-tRNA ligase activity"/>
    <property type="evidence" value="ECO:0007669"/>
    <property type="project" value="UniProtKB-UniRule"/>
</dbReference>
<dbReference type="GO" id="GO:0000049">
    <property type="term" value="F:tRNA binding"/>
    <property type="evidence" value="ECO:0007669"/>
    <property type="project" value="UniProtKB-KW"/>
</dbReference>
<dbReference type="GO" id="GO:0006435">
    <property type="term" value="P:threonyl-tRNA aminoacylation"/>
    <property type="evidence" value="ECO:0007669"/>
    <property type="project" value="UniProtKB-UniRule"/>
</dbReference>
<dbReference type="CDD" id="cd01667">
    <property type="entry name" value="TGS_ThrRS"/>
    <property type="match status" value="1"/>
</dbReference>
<dbReference type="CDD" id="cd00860">
    <property type="entry name" value="ThrRS_anticodon"/>
    <property type="match status" value="1"/>
</dbReference>
<dbReference type="CDD" id="cd00771">
    <property type="entry name" value="ThrRS_core"/>
    <property type="match status" value="1"/>
</dbReference>
<dbReference type="FunFam" id="3.10.20.30:FF:000005">
    <property type="entry name" value="Threonine--tRNA ligase"/>
    <property type="match status" value="1"/>
</dbReference>
<dbReference type="FunFam" id="3.30.54.20:FF:000002">
    <property type="entry name" value="Threonine--tRNA ligase"/>
    <property type="match status" value="1"/>
</dbReference>
<dbReference type="FunFam" id="3.30.930.10:FF:000002">
    <property type="entry name" value="Threonine--tRNA ligase"/>
    <property type="match status" value="1"/>
</dbReference>
<dbReference type="FunFam" id="3.40.50.800:FF:000001">
    <property type="entry name" value="Threonine--tRNA ligase"/>
    <property type="match status" value="1"/>
</dbReference>
<dbReference type="FunFam" id="3.30.980.10:FF:000005">
    <property type="entry name" value="Threonyl-tRNA synthetase, mitochondrial"/>
    <property type="match status" value="1"/>
</dbReference>
<dbReference type="Gene3D" id="3.10.20.30">
    <property type="match status" value="1"/>
</dbReference>
<dbReference type="Gene3D" id="3.30.54.20">
    <property type="match status" value="1"/>
</dbReference>
<dbReference type="Gene3D" id="3.40.50.800">
    <property type="entry name" value="Anticodon-binding domain"/>
    <property type="match status" value="1"/>
</dbReference>
<dbReference type="Gene3D" id="3.30.930.10">
    <property type="entry name" value="Bira Bifunctional Protein, Domain 2"/>
    <property type="match status" value="1"/>
</dbReference>
<dbReference type="Gene3D" id="3.30.980.10">
    <property type="entry name" value="Threonyl-trna Synthetase, Chain A, domain 2"/>
    <property type="match status" value="1"/>
</dbReference>
<dbReference type="HAMAP" id="MF_00184">
    <property type="entry name" value="Thr_tRNA_synth"/>
    <property type="match status" value="1"/>
</dbReference>
<dbReference type="InterPro" id="IPR002314">
    <property type="entry name" value="aa-tRNA-synt_IIb"/>
</dbReference>
<dbReference type="InterPro" id="IPR006195">
    <property type="entry name" value="aa-tRNA-synth_II"/>
</dbReference>
<dbReference type="InterPro" id="IPR045864">
    <property type="entry name" value="aa-tRNA-synth_II/BPL/LPL"/>
</dbReference>
<dbReference type="InterPro" id="IPR004154">
    <property type="entry name" value="Anticodon-bd"/>
</dbReference>
<dbReference type="InterPro" id="IPR036621">
    <property type="entry name" value="Anticodon-bd_dom_sf"/>
</dbReference>
<dbReference type="InterPro" id="IPR012675">
    <property type="entry name" value="Beta-grasp_dom_sf"/>
</dbReference>
<dbReference type="InterPro" id="IPR004095">
    <property type="entry name" value="TGS"/>
</dbReference>
<dbReference type="InterPro" id="IPR012676">
    <property type="entry name" value="TGS-like"/>
</dbReference>
<dbReference type="InterPro" id="IPR002320">
    <property type="entry name" value="Thr-tRNA-ligase_IIa"/>
</dbReference>
<dbReference type="InterPro" id="IPR018163">
    <property type="entry name" value="Thr/Ala-tRNA-synth_IIc_edit"/>
</dbReference>
<dbReference type="InterPro" id="IPR047246">
    <property type="entry name" value="ThrRS_anticodon"/>
</dbReference>
<dbReference type="InterPro" id="IPR033728">
    <property type="entry name" value="ThrRS_core"/>
</dbReference>
<dbReference type="InterPro" id="IPR012947">
    <property type="entry name" value="tRNA_SAD"/>
</dbReference>
<dbReference type="NCBIfam" id="TIGR00418">
    <property type="entry name" value="thrS"/>
    <property type="match status" value="1"/>
</dbReference>
<dbReference type="PANTHER" id="PTHR11451:SF44">
    <property type="entry name" value="THREONINE--TRNA LIGASE, CHLOROPLASTIC_MITOCHONDRIAL 2"/>
    <property type="match status" value="1"/>
</dbReference>
<dbReference type="PANTHER" id="PTHR11451">
    <property type="entry name" value="THREONINE-TRNA LIGASE"/>
    <property type="match status" value="1"/>
</dbReference>
<dbReference type="Pfam" id="PF03129">
    <property type="entry name" value="HGTP_anticodon"/>
    <property type="match status" value="1"/>
</dbReference>
<dbReference type="Pfam" id="PF02824">
    <property type="entry name" value="TGS"/>
    <property type="match status" value="1"/>
</dbReference>
<dbReference type="Pfam" id="PF00587">
    <property type="entry name" value="tRNA-synt_2b"/>
    <property type="match status" value="1"/>
</dbReference>
<dbReference type="Pfam" id="PF07973">
    <property type="entry name" value="tRNA_SAD"/>
    <property type="match status" value="1"/>
</dbReference>
<dbReference type="PRINTS" id="PR01047">
    <property type="entry name" value="TRNASYNTHTHR"/>
</dbReference>
<dbReference type="SMART" id="SM00863">
    <property type="entry name" value="tRNA_SAD"/>
    <property type="match status" value="1"/>
</dbReference>
<dbReference type="SUPFAM" id="SSF52954">
    <property type="entry name" value="Class II aaRS ABD-related"/>
    <property type="match status" value="1"/>
</dbReference>
<dbReference type="SUPFAM" id="SSF55681">
    <property type="entry name" value="Class II aaRS and biotin synthetases"/>
    <property type="match status" value="1"/>
</dbReference>
<dbReference type="SUPFAM" id="SSF81271">
    <property type="entry name" value="TGS-like"/>
    <property type="match status" value="1"/>
</dbReference>
<dbReference type="SUPFAM" id="SSF55186">
    <property type="entry name" value="ThrRS/AlaRS common domain"/>
    <property type="match status" value="1"/>
</dbReference>
<dbReference type="PROSITE" id="PS50862">
    <property type="entry name" value="AA_TRNA_LIGASE_II"/>
    <property type="match status" value="1"/>
</dbReference>
<dbReference type="PROSITE" id="PS51880">
    <property type="entry name" value="TGS"/>
    <property type="match status" value="1"/>
</dbReference>
<reference key="1">
    <citation type="journal article" date="2010" name="Genome Biol. Evol.">
        <title>Continuing evolution of Burkholderia mallei through genome reduction and large-scale rearrangements.</title>
        <authorList>
            <person name="Losada L."/>
            <person name="Ronning C.M."/>
            <person name="DeShazer D."/>
            <person name="Woods D."/>
            <person name="Fedorova N."/>
            <person name="Kim H.S."/>
            <person name="Shabalina S.A."/>
            <person name="Pearson T.R."/>
            <person name="Brinkac L."/>
            <person name="Tan P."/>
            <person name="Nandi T."/>
            <person name="Crabtree J."/>
            <person name="Badger J."/>
            <person name="Beckstrom-Sternberg S."/>
            <person name="Saqib M."/>
            <person name="Schutzer S.E."/>
            <person name="Keim P."/>
            <person name="Nierman W.C."/>
        </authorList>
    </citation>
    <scope>NUCLEOTIDE SEQUENCE [LARGE SCALE GENOMIC DNA]</scope>
    <source>
        <strain>668</strain>
    </source>
</reference>
<keyword id="KW-0030">Aminoacyl-tRNA synthetase</keyword>
<keyword id="KW-0067">ATP-binding</keyword>
<keyword id="KW-0963">Cytoplasm</keyword>
<keyword id="KW-0436">Ligase</keyword>
<keyword id="KW-0479">Metal-binding</keyword>
<keyword id="KW-0547">Nucleotide-binding</keyword>
<keyword id="KW-0648">Protein biosynthesis</keyword>
<keyword id="KW-0694">RNA-binding</keyword>
<keyword id="KW-0820">tRNA-binding</keyword>
<keyword id="KW-0862">Zinc</keyword>
<organism>
    <name type="scientific">Burkholderia pseudomallei (strain 668)</name>
    <dbReference type="NCBI Taxonomy" id="320373"/>
    <lineage>
        <taxon>Bacteria</taxon>
        <taxon>Pseudomonadati</taxon>
        <taxon>Pseudomonadota</taxon>
        <taxon>Betaproteobacteria</taxon>
        <taxon>Burkholderiales</taxon>
        <taxon>Burkholderiaceae</taxon>
        <taxon>Burkholderia</taxon>
        <taxon>pseudomallei group</taxon>
    </lineage>
</organism>
<comment type="function">
    <text evidence="1">Catalyzes the attachment of threonine to tRNA(Thr) in a two-step reaction: L-threonine is first activated by ATP to form Thr-AMP and then transferred to the acceptor end of tRNA(Thr). Also edits incorrectly charged L-seryl-tRNA(Thr).</text>
</comment>
<comment type="catalytic activity">
    <reaction evidence="1">
        <text>tRNA(Thr) + L-threonine + ATP = L-threonyl-tRNA(Thr) + AMP + diphosphate + H(+)</text>
        <dbReference type="Rhea" id="RHEA:24624"/>
        <dbReference type="Rhea" id="RHEA-COMP:9670"/>
        <dbReference type="Rhea" id="RHEA-COMP:9704"/>
        <dbReference type="ChEBI" id="CHEBI:15378"/>
        <dbReference type="ChEBI" id="CHEBI:30616"/>
        <dbReference type="ChEBI" id="CHEBI:33019"/>
        <dbReference type="ChEBI" id="CHEBI:57926"/>
        <dbReference type="ChEBI" id="CHEBI:78442"/>
        <dbReference type="ChEBI" id="CHEBI:78534"/>
        <dbReference type="ChEBI" id="CHEBI:456215"/>
        <dbReference type="EC" id="6.1.1.3"/>
    </reaction>
</comment>
<comment type="cofactor">
    <cofactor evidence="1">
        <name>Zn(2+)</name>
        <dbReference type="ChEBI" id="CHEBI:29105"/>
    </cofactor>
    <text evidence="1">Binds 1 zinc ion per subunit.</text>
</comment>
<comment type="subunit">
    <text evidence="1">Homodimer.</text>
</comment>
<comment type="subcellular location">
    <subcellularLocation>
        <location evidence="1">Cytoplasm</location>
    </subcellularLocation>
</comment>
<comment type="similarity">
    <text evidence="1">Belongs to the class-II aminoacyl-tRNA synthetase family.</text>
</comment>
<proteinExistence type="inferred from homology"/>
<accession>A3N8T1</accession>
<name>SYT_BURP6</name>